<evidence type="ECO:0000250" key="1"/>
<evidence type="ECO:0000250" key="2">
    <source>
        <dbReference type="UniProtKB" id="Q9NPF7"/>
    </source>
</evidence>
<evidence type="ECO:0000255" key="3"/>
<evidence type="ECO:0000305" key="4"/>
<gene>
    <name type="primary">IL23A</name>
</gene>
<proteinExistence type="evidence at transcript level"/>
<accession>Q6LA37</accession>
<comment type="function">
    <text evidence="2">Associates with IL12B to form the pro-inflammatory cytokine IL-23 that plays different roles in innate and adaptive immunity. Released by antigen-presenting cells such as dendritic cells or macrophages, binds to a heterodimeric receptor complex composed of IL12RB1 and IL23R to activate JAK2 and TYK2 which then phosphorylate the receptor to form a docking site leading to the phosphorylation of STAT3 and STAT4. This process leads to activation of several pathways including p38 MAPK or NF-kappa-B and promotes the production of pro-inflammatory cytokines such as interleukin-17A/IL17A. In turn, participates in the early and effective intracellular bacterial clearance. Promotes the expansion and survival of T-helper 17 cells, a CD4-positive helper T-cell subset that produces IL-17, as well as other IL-17-producing cells.</text>
</comment>
<comment type="subunit">
    <text evidence="2">Heterodimer with IL12B; disulfide-linked. The heterodimer is known as interleukin IL-23. Interacts with IL23R; this interaction enables recruitment of IL12RB1.</text>
</comment>
<comment type="subcellular location">
    <subcellularLocation>
        <location evidence="1">Secreted</location>
    </subcellularLocation>
    <text evidence="1">Secreted upon association with IL12B.</text>
</comment>
<comment type="similarity">
    <text evidence="4">Belongs to the IL-6 superfamily.</text>
</comment>
<protein>
    <recommendedName>
        <fullName>Interleukin-23 subunit alpha</fullName>
        <shortName>IL-23 subunit alpha</shortName>
        <shortName>IL-23-A</shortName>
    </recommendedName>
    <alternativeName>
        <fullName>Interleukin-23 subunit p19</fullName>
        <shortName>IL-23p19</shortName>
    </alternativeName>
</protein>
<reference key="1">
    <citation type="submission" date="2001-03" db="EMBL/GenBank/DDBJ databases">
        <title>Molecular cloning and functional characterization of guinea pig interleukin-23.</title>
        <authorList>
            <person name="Shiratori I."/>
            <person name="Seya T."/>
        </authorList>
    </citation>
    <scope>NUCLEOTIDE SEQUENCE [MRNA]</scope>
    <source>
        <strain>Hartley</strain>
        <tissue>Macrophage</tissue>
    </source>
</reference>
<organism>
    <name type="scientific">Cavia porcellus</name>
    <name type="common">Guinea pig</name>
    <dbReference type="NCBI Taxonomy" id="10141"/>
    <lineage>
        <taxon>Eukaryota</taxon>
        <taxon>Metazoa</taxon>
        <taxon>Chordata</taxon>
        <taxon>Craniata</taxon>
        <taxon>Vertebrata</taxon>
        <taxon>Euteleostomi</taxon>
        <taxon>Mammalia</taxon>
        <taxon>Eutheria</taxon>
        <taxon>Euarchontoglires</taxon>
        <taxon>Glires</taxon>
        <taxon>Rodentia</taxon>
        <taxon>Hystricomorpha</taxon>
        <taxon>Caviidae</taxon>
        <taxon>Cavia</taxon>
    </lineage>
</organism>
<name>IL23A_CAVPO</name>
<sequence length="189" mass="20808">MLGSTAVMLLLLLPWTAQTRAVSGSSNPSWTQCQQLSQKLCTLAWSAHPSVGHVEPPREEADEETTDYVPHILCGDGCDPQGLKDNSQFCLQRIYQGLVFYQNLLGSDIFTGEPPLFPDGPVSQLHASLLGLSQLLQPEVHQWEPQIPSLSPNQPWQRLLLRIKILRSFQAFVAVAARVFGHGAATLTP</sequence>
<dbReference type="EMBL" id="AB058509">
    <property type="protein sequence ID" value="BAD21123.1"/>
    <property type="molecule type" value="mRNA"/>
</dbReference>
<dbReference type="RefSeq" id="NP_001166440.1">
    <property type="nucleotide sequence ID" value="NM_001172969.1"/>
</dbReference>
<dbReference type="SMR" id="Q6LA37"/>
<dbReference type="FunCoup" id="Q6LA37">
    <property type="interactions" value="352"/>
</dbReference>
<dbReference type="STRING" id="10141.ENSCPOP00000013451"/>
<dbReference type="Ensembl" id="ENSCPOT00000015072.2">
    <property type="protein sequence ID" value="ENSCPOP00000013451.1"/>
    <property type="gene ID" value="ENSCPOG00000014926.3"/>
</dbReference>
<dbReference type="GeneID" id="100135557"/>
<dbReference type="KEGG" id="cpoc:100135557"/>
<dbReference type="CTD" id="51561"/>
<dbReference type="VEuPathDB" id="HostDB:ENSCPOG00000014926"/>
<dbReference type="eggNOG" id="ENOG502STAQ">
    <property type="taxonomic scope" value="Eukaryota"/>
</dbReference>
<dbReference type="GeneTree" id="ENSGT00390000006482"/>
<dbReference type="HOGENOM" id="CLU_122915_0_0_1"/>
<dbReference type="InParanoid" id="Q6LA37"/>
<dbReference type="OMA" id="IRCSDAC"/>
<dbReference type="OrthoDB" id="9447007at2759"/>
<dbReference type="TreeFam" id="TF337234"/>
<dbReference type="Proteomes" id="UP000005447">
    <property type="component" value="Unassembled WGS sequence"/>
</dbReference>
<dbReference type="Bgee" id="ENSCPOG00000014926">
    <property type="expression patterns" value="Expressed in zone of skin"/>
</dbReference>
<dbReference type="GO" id="GO:0070743">
    <property type="term" value="C:interleukin-23 complex"/>
    <property type="evidence" value="ECO:0007669"/>
    <property type="project" value="Ensembl"/>
</dbReference>
<dbReference type="GO" id="GO:0005125">
    <property type="term" value="F:cytokine activity"/>
    <property type="evidence" value="ECO:0007669"/>
    <property type="project" value="UniProtKB-KW"/>
</dbReference>
<dbReference type="GO" id="GO:0045519">
    <property type="term" value="F:interleukin-23 receptor binding"/>
    <property type="evidence" value="ECO:0007669"/>
    <property type="project" value="Ensembl"/>
</dbReference>
<dbReference type="GO" id="GO:0007259">
    <property type="term" value="P:cell surface receptor signaling pathway via JAK-STAT"/>
    <property type="evidence" value="ECO:0007669"/>
    <property type="project" value="Ensembl"/>
</dbReference>
<dbReference type="GO" id="GO:0050829">
    <property type="term" value="P:defense response to Gram-negative bacterium"/>
    <property type="evidence" value="ECO:0007669"/>
    <property type="project" value="Ensembl"/>
</dbReference>
<dbReference type="GO" id="GO:0051607">
    <property type="term" value="P:defense response to virus"/>
    <property type="evidence" value="ECO:0007669"/>
    <property type="project" value="UniProtKB-KW"/>
</dbReference>
<dbReference type="GO" id="GO:0006954">
    <property type="term" value="P:inflammatory response"/>
    <property type="evidence" value="ECO:0007669"/>
    <property type="project" value="UniProtKB-KW"/>
</dbReference>
<dbReference type="GO" id="GO:0045087">
    <property type="term" value="P:innate immune response"/>
    <property type="evidence" value="ECO:0007669"/>
    <property type="project" value="UniProtKB-KW"/>
</dbReference>
<dbReference type="GO" id="GO:0032693">
    <property type="term" value="P:negative regulation of interleukin-10 production"/>
    <property type="evidence" value="ECO:0007669"/>
    <property type="project" value="Ensembl"/>
</dbReference>
<dbReference type="GO" id="GO:0042104">
    <property type="term" value="P:positive regulation of activated T cell proliferation"/>
    <property type="evidence" value="ECO:0007669"/>
    <property type="project" value="Ensembl"/>
</dbReference>
<dbReference type="GO" id="GO:0002230">
    <property type="term" value="P:positive regulation of defense response to virus by host"/>
    <property type="evidence" value="ECO:0007669"/>
    <property type="project" value="Ensembl"/>
</dbReference>
<dbReference type="GO" id="GO:0032725">
    <property type="term" value="P:positive regulation of granulocyte macrophage colony-stimulating factor production"/>
    <property type="evidence" value="ECO:0007669"/>
    <property type="project" value="Ensembl"/>
</dbReference>
<dbReference type="GO" id="GO:0032733">
    <property type="term" value="P:positive regulation of interleukin-10 production"/>
    <property type="evidence" value="ECO:0007669"/>
    <property type="project" value="Ensembl"/>
</dbReference>
<dbReference type="GO" id="GO:0032735">
    <property type="term" value="P:positive regulation of interleukin-12 production"/>
    <property type="evidence" value="ECO:0007669"/>
    <property type="project" value="Ensembl"/>
</dbReference>
<dbReference type="GO" id="GO:0032740">
    <property type="term" value="P:positive regulation of interleukin-17 production"/>
    <property type="evidence" value="ECO:0007669"/>
    <property type="project" value="Ensembl"/>
</dbReference>
<dbReference type="GO" id="GO:0043382">
    <property type="term" value="P:positive regulation of memory T cell differentiation"/>
    <property type="evidence" value="ECO:0007669"/>
    <property type="project" value="Ensembl"/>
</dbReference>
<dbReference type="GO" id="GO:0032819">
    <property type="term" value="P:positive regulation of natural killer cell proliferation"/>
    <property type="evidence" value="ECO:0007669"/>
    <property type="project" value="Ensembl"/>
</dbReference>
<dbReference type="GO" id="GO:0090023">
    <property type="term" value="P:positive regulation of neutrophil chemotaxis"/>
    <property type="evidence" value="ECO:0007669"/>
    <property type="project" value="Ensembl"/>
</dbReference>
<dbReference type="GO" id="GO:0051142">
    <property type="term" value="P:positive regulation of NK T cell proliferation"/>
    <property type="evidence" value="ECO:0007669"/>
    <property type="project" value="Ensembl"/>
</dbReference>
<dbReference type="GO" id="GO:0045672">
    <property type="term" value="P:positive regulation of osteoclast differentiation"/>
    <property type="evidence" value="ECO:0007669"/>
    <property type="project" value="Ensembl"/>
</dbReference>
<dbReference type="GO" id="GO:0001916">
    <property type="term" value="P:positive regulation of T cell mediated cytotoxicity"/>
    <property type="evidence" value="ECO:0007669"/>
    <property type="project" value="Ensembl"/>
</dbReference>
<dbReference type="GO" id="GO:0002827">
    <property type="term" value="P:positive regulation of T-helper 1 type immune response"/>
    <property type="evidence" value="ECO:0007669"/>
    <property type="project" value="Ensembl"/>
</dbReference>
<dbReference type="GO" id="GO:2000330">
    <property type="term" value="P:positive regulation of T-helper 17 cell lineage commitment"/>
    <property type="evidence" value="ECO:0007669"/>
    <property type="project" value="Ensembl"/>
</dbReference>
<dbReference type="GO" id="GO:0045944">
    <property type="term" value="P:positive regulation of transcription by RNA polymerase II"/>
    <property type="evidence" value="ECO:0007669"/>
    <property type="project" value="Ensembl"/>
</dbReference>
<dbReference type="GO" id="GO:0032760">
    <property type="term" value="P:positive regulation of tumor necrosis factor production"/>
    <property type="evidence" value="ECO:0007669"/>
    <property type="project" value="Ensembl"/>
</dbReference>
<dbReference type="GO" id="GO:0032729">
    <property type="term" value="P:positive regulation of type II interferon production"/>
    <property type="evidence" value="ECO:0007669"/>
    <property type="project" value="Ensembl"/>
</dbReference>
<dbReference type="GO" id="GO:0042098">
    <property type="term" value="P:T cell proliferation"/>
    <property type="evidence" value="ECO:0007669"/>
    <property type="project" value="Ensembl"/>
</dbReference>
<dbReference type="GO" id="GO:0048771">
    <property type="term" value="P:tissue remodeling"/>
    <property type="evidence" value="ECO:0007669"/>
    <property type="project" value="UniProtKB-KW"/>
</dbReference>
<dbReference type="FunFam" id="1.20.1250.10:FF:000024">
    <property type="entry name" value="Interleukin-23 subunit alpha"/>
    <property type="match status" value="1"/>
</dbReference>
<dbReference type="Gene3D" id="1.20.1250.10">
    <property type="match status" value="1"/>
</dbReference>
<dbReference type="InterPro" id="IPR009079">
    <property type="entry name" value="4_helix_cytokine-like_core"/>
</dbReference>
<dbReference type="InterPro" id="IPR010831">
    <property type="entry name" value="IL-23_alpha"/>
</dbReference>
<dbReference type="PANTHER" id="PTHR15947:SF0">
    <property type="entry name" value="INTERLEUKIN-23 SUBUNIT ALPHA"/>
    <property type="match status" value="1"/>
</dbReference>
<dbReference type="PANTHER" id="PTHR15947">
    <property type="entry name" value="SGRF"/>
    <property type="match status" value="1"/>
</dbReference>
<dbReference type="Pfam" id="PF16649">
    <property type="entry name" value="IL23"/>
    <property type="match status" value="1"/>
</dbReference>
<dbReference type="SUPFAM" id="SSF47266">
    <property type="entry name" value="4-helical cytokines"/>
    <property type="match status" value="1"/>
</dbReference>
<feature type="signal peptide" evidence="3">
    <location>
        <begin position="1"/>
        <end position="19"/>
    </location>
</feature>
<feature type="chain" id="PRO_0000259486" description="Interleukin-23 subunit alpha">
    <location>
        <begin position="20"/>
        <end position="189"/>
    </location>
</feature>
<keyword id="KW-0051">Antiviral defense</keyword>
<keyword id="KW-0202">Cytokine</keyword>
<keyword id="KW-1015">Disulfide bond</keyword>
<keyword id="KW-0391">Immunity</keyword>
<keyword id="KW-0395">Inflammatory response</keyword>
<keyword id="KW-0399">Innate immunity</keyword>
<keyword id="KW-1185">Reference proteome</keyword>
<keyword id="KW-0964">Secreted</keyword>
<keyword id="KW-0732">Signal</keyword>
<keyword id="KW-0797">Tissue remodeling</keyword>